<evidence type="ECO:0000250" key="1"/>
<evidence type="ECO:0000250" key="2">
    <source>
        <dbReference type="UniProtKB" id="P03315"/>
    </source>
</evidence>
<evidence type="ECO:0000250" key="3">
    <source>
        <dbReference type="UniProtKB" id="P03316"/>
    </source>
</evidence>
<evidence type="ECO:0000250" key="4">
    <source>
        <dbReference type="UniProtKB" id="P08491"/>
    </source>
</evidence>
<evidence type="ECO:0000250" key="5">
    <source>
        <dbReference type="UniProtKB" id="P09592"/>
    </source>
</evidence>
<evidence type="ECO:0000250" key="6">
    <source>
        <dbReference type="UniProtKB" id="P0DOK1"/>
    </source>
</evidence>
<evidence type="ECO:0000250" key="7">
    <source>
        <dbReference type="UniProtKB" id="P27284"/>
    </source>
</evidence>
<evidence type="ECO:0000250" key="8">
    <source>
        <dbReference type="UniProtKB" id="P89946"/>
    </source>
</evidence>
<evidence type="ECO:0000250" key="9">
    <source>
        <dbReference type="UniProtKB" id="Q5XXP3"/>
    </source>
</evidence>
<evidence type="ECO:0000250" key="10">
    <source>
        <dbReference type="UniProtKB" id="Q5Y388"/>
    </source>
</evidence>
<evidence type="ECO:0000250" key="11">
    <source>
        <dbReference type="UniProtKB" id="Q86925"/>
    </source>
</evidence>
<evidence type="ECO:0000250" key="12">
    <source>
        <dbReference type="UniProtKB" id="Q8JUX5"/>
    </source>
</evidence>
<evidence type="ECO:0000255" key="13"/>
<evidence type="ECO:0000255" key="14">
    <source>
        <dbReference type="PROSITE-ProRule" id="PRU01027"/>
    </source>
</evidence>
<evidence type="ECO:0000256" key="15">
    <source>
        <dbReference type="SAM" id="MobiDB-lite"/>
    </source>
</evidence>
<evidence type="ECO:0000305" key="16"/>
<keyword id="KW-0167">Capsid protein</keyword>
<keyword id="KW-0165">Cleavage on pair of basic residues</keyword>
<keyword id="KW-1015">Disulfide bond</keyword>
<keyword id="KW-1170">Fusion of virus membrane with host endosomal membrane</keyword>
<keyword id="KW-1168">Fusion of virus membrane with host membrane</keyword>
<keyword id="KW-0325">Glycoprotein</keyword>
<keyword id="KW-1032">Host cell membrane</keyword>
<keyword id="KW-1035">Host cytoplasm</keyword>
<keyword id="KW-1038">Host endoplasmic reticulum</keyword>
<keyword id="KW-1040">Host Golgi apparatus</keyword>
<keyword id="KW-1043">Host membrane</keyword>
<keyword id="KW-1048">Host nucleus</keyword>
<keyword id="KW-0945">Host-virus interaction</keyword>
<keyword id="KW-0378">Hydrolase</keyword>
<keyword id="KW-0407">Ion channel</keyword>
<keyword id="KW-0406">Ion transport</keyword>
<keyword id="KW-0449">Lipoprotein</keyword>
<keyword id="KW-0472">Membrane</keyword>
<keyword id="KW-0564">Palmitate</keyword>
<keyword id="KW-0645">Protease</keyword>
<keyword id="KW-0694">RNA-binding</keyword>
<keyword id="KW-0720">Serine protease</keyword>
<keyword id="KW-1144">T=4 icosahedral capsid protein</keyword>
<keyword id="KW-0812">Transmembrane</keyword>
<keyword id="KW-1133">Transmembrane helix</keyword>
<keyword id="KW-0813">Transport</keyword>
<keyword id="KW-1161">Viral attachment to host cell</keyword>
<keyword id="KW-1234">Viral attachment to host entry receptor</keyword>
<keyword id="KW-1182">Viral ion channel</keyword>
<keyword id="KW-1162">Viral penetration into host cytoplasm</keyword>
<keyword id="KW-0946">Virion</keyword>
<keyword id="KW-1160">Virus entry into host cell</keyword>
<dbReference type="EC" id="3.4.21.90" evidence="2"/>
<dbReference type="EMBL" id="M20162">
    <property type="protein sequence ID" value="AAA96330.1"/>
    <property type="molecule type" value="Genomic_RNA"/>
</dbReference>
<dbReference type="PIR" id="B28605">
    <property type="entry name" value="VHWVRA"/>
</dbReference>
<dbReference type="RefSeq" id="NP_062880.1">
    <property type="nucleotide sequence ID" value="NC_001544.1"/>
</dbReference>
<dbReference type="MEROPS" id="S03.001"/>
<dbReference type="GeneID" id="1489707"/>
<dbReference type="KEGG" id="vg:1489707"/>
<dbReference type="Proteomes" id="UP000006579">
    <property type="component" value="Segment"/>
</dbReference>
<dbReference type="GO" id="GO:0030430">
    <property type="term" value="C:host cell cytoplasm"/>
    <property type="evidence" value="ECO:0007669"/>
    <property type="project" value="UniProtKB-SubCell"/>
</dbReference>
<dbReference type="GO" id="GO:0042025">
    <property type="term" value="C:host cell nucleus"/>
    <property type="evidence" value="ECO:0007669"/>
    <property type="project" value="UniProtKB-SubCell"/>
</dbReference>
<dbReference type="GO" id="GO:0020002">
    <property type="term" value="C:host cell plasma membrane"/>
    <property type="evidence" value="ECO:0007669"/>
    <property type="project" value="UniProtKB-SubCell"/>
</dbReference>
<dbReference type="GO" id="GO:0016020">
    <property type="term" value="C:membrane"/>
    <property type="evidence" value="ECO:0007669"/>
    <property type="project" value="UniProtKB-KW"/>
</dbReference>
<dbReference type="GO" id="GO:0039619">
    <property type="term" value="C:T=4 icosahedral viral capsid"/>
    <property type="evidence" value="ECO:0007669"/>
    <property type="project" value="UniProtKB-KW"/>
</dbReference>
<dbReference type="GO" id="GO:0055036">
    <property type="term" value="C:virion membrane"/>
    <property type="evidence" value="ECO:0007669"/>
    <property type="project" value="UniProtKB-SubCell"/>
</dbReference>
<dbReference type="GO" id="GO:0003723">
    <property type="term" value="F:RNA binding"/>
    <property type="evidence" value="ECO:0007669"/>
    <property type="project" value="UniProtKB-KW"/>
</dbReference>
<dbReference type="GO" id="GO:0004252">
    <property type="term" value="F:serine-type endopeptidase activity"/>
    <property type="evidence" value="ECO:0007669"/>
    <property type="project" value="InterPro"/>
</dbReference>
<dbReference type="GO" id="GO:0005198">
    <property type="term" value="F:structural molecule activity"/>
    <property type="evidence" value="ECO:0007669"/>
    <property type="project" value="InterPro"/>
</dbReference>
<dbReference type="GO" id="GO:0039654">
    <property type="term" value="P:fusion of virus membrane with host endosome membrane"/>
    <property type="evidence" value="ECO:0007669"/>
    <property type="project" value="UniProtKB-KW"/>
</dbReference>
<dbReference type="GO" id="GO:0006508">
    <property type="term" value="P:proteolysis"/>
    <property type="evidence" value="ECO:0007669"/>
    <property type="project" value="UniProtKB-KW"/>
</dbReference>
<dbReference type="GO" id="GO:0046718">
    <property type="term" value="P:symbiont entry into host cell"/>
    <property type="evidence" value="ECO:0007669"/>
    <property type="project" value="UniProtKB-KW"/>
</dbReference>
<dbReference type="GO" id="GO:0039722">
    <property type="term" value="P:symbiont-mediated suppression of host toll-like receptor signaling pathway"/>
    <property type="evidence" value="ECO:0000250"/>
    <property type="project" value="UniProtKB"/>
</dbReference>
<dbReference type="GO" id="GO:0019062">
    <property type="term" value="P:virion attachment to host cell"/>
    <property type="evidence" value="ECO:0007669"/>
    <property type="project" value="UniProtKB-KW"/>
</dbReference>
<dbReference type="FunFam" id="2.40.10.10:FF:000076">
    <property type="entry name" value="Structural polyprotein"/>
    <property type="match status" value="1"/>
</dbReference>
<dbReference type="FunFam" id="2.60.98.10:FF:000002">
    <property type="entry name" value="Structural polyprotein"/>
    <property type="match status" value="1"/>
</dbReference>
<dbReference type="Gene3D" id="1.10.287.2230">
    <property type="match status" value="1"/>
</dbReference>
<dbReference type="Gene3D" id="2.60.40.350">
    <property type="match status" value="1"/>
</dbReference>
<dbReference type="Gene3D" id="2.60.40.3200">
    <property type="entry name" value="Alphavirus E2 glycoprotein, A domain"/>
    <property type="match status" value="1"/>
</dbReference>
<dbReference type="Gene3D" id="2.60.40.4310">
    <property type="entry name" value="Alphavirus E2 glycoprotein, domain B"/>
    <property type="match status" value="1"/>
</dbReference>
<dbReference type="Gene3D" id="2.60.40.2400">
    <property type="entry name" value="Alphavirus E2 glycoprotein, domain C"/>
    <property type="match status" value="1"/>
</dbReference>
<dbReference type="Gene3D" id="2.60.98.10">
    <property type="entry name" value="Tick-borne Encephalitis virus Glycoprotein, domain 1"/>
    <property type="match status" value="3"/>
</dbReference>
<dbReference type="Gene3D" id="2.40.10.10">
    <property type="entry name" value="Trypsin-like serine proteases"/>
    <property type="match status" value="2"/>
</dbReference>
<dbReference type="InterPro" id="IPR002548">
    <property type="entry name" value="Alpha_E1_glycop"/>
</dbReference>
<dbReference type="InterPro" id="IPR000936">
    <property type="entry name" value="Alpha_E2_glycop"/>
</dbReference>
<dbReference type="InterPro" id="IPR002533">
    <property type="entry name" value="Alpha_E3_glycop"/>
</dbReference>
<dbReference type="InterPro" id="IPR042304">
    <property type="entry name" value="Alphavir_E2_A"/>
</dbReference>
<dbReference type="InterPro" id="IPR042305">
    <property type="entry name" value="Alphavir_E2_B"/>
</dbReference>
<dbReference type="InterPro" id="IPR042306">
    <property type="entry name" value="Alphavir_E2_C"/>
</dbReference>
<dbReference type="InterPro" id="IPR000336">
    <property type="entry name" value="Flavivir/Alphavir_Ig-like_sf"/>
</dbReference>
<dbReference type="InterPro" id="IPR036253">
    <property type="entry name" value="Glycoprot_cen/dimer_sf"/>
</dbReference>
<dbReference type="InterPro" id="IPR038055">
    <property type="entry name" value="Glycoprot_E_dimer_dom"/>
</dbReference>
<dbReference type="InterPro" id="IPR014756">
    <property type="entry name" value="Ig_E-set"/>
</dbReference>
<dbReference type="InterPro" id="IPR009003">
    <property type="entry name" value="Peptidase_S1_PA"/>
</dbReference>
<dbReference type="InterPro" id="IPR043504">
    <property type="entry name" value="Peptidase_S1_PA_chymotrypsin"/>
</dbReference>
<dbReference type="InterPro" id="IPR000930">
    <property type="entry name" value="Peptidase_S3"/>
</dbReference>
<dbReference type="Pfam" id="PF01589">
    <property type="entry name" value="Alpha_E1_glycop"/>
    <property type="match status" value="1"/>
</dbReference>
<dbReference type="Pfam" id="PF00943">
    <property type="entry name" value="Alpha_E2_glycop"/>
    <property type="match status" value="1"/>
</dbReference>
<dbReference type="Pfam" id="PF01563">
    <property type="entry name" value="Alpha_E3_glycop"/>
    <property type="match status" value="1"/>
</dbReference>
<dbReference type="Pfam" id="PF00944">
    <property type="entry name" value="Peptidase_S3"/>
    <property type="match status" value="1"/>
</dbReference>
<dbReference type="PRINTS" id="PR00798">
    <property type="entry name" value="TOGAVIRIN"/>
</dbReference>
<dbReference type="SUPFAM" id="SSF81296">
    <property type="entry name" value="E set domains"/>
    <property type="match status" value="1"/>
</dbReference>
<dbReference type="SUPFAM" id="SSF50494">
    <property type="entry name" value="Trypsin-like serine proteases"/>
    <property type="match status" value="1"/>
</dbReference>
<dbReference type="SUPFAM" id="SSF56983">
    <property type="entry name" value="Viral glycoprotein, central and dimerisation domains"/>
    <property type="match status" value="1"/>
</dbReference>
<dbReference type="PROSITE" id="PS51690">
    <property type="entry name" value="ALPHAVIRUS_CP"/>
    <property type="match status" value="1"/>
</dbReference>
<organism>
    <name type="scientific">Ross river virus (strain NB5092)</name>
    <name type="common">RRV</name>
    <dbReference type="NCBI Taxonomy" id="11031"/>
    <lineage>
        <taxon>Viruses</taxon>
        <taxon>Riboviria</taxon>
        <taxon>Orthornavirae</taxon>
        <taxon>Kitrinoviricota</taxon>
        <taxon>Alsuviricetes</taxon>
        <taxon>Martellivirales</taxon>
        <taxon>Togaviridae</taxon>
        <taxon>Alphavirus</taxon>
        <taxon>Ross River virus</taxon>
    </lineage>
</organism>
<accession>P13890</accession>
<sequence>MNYIPTQTFYGRRWRPRPAFRPWQVPMQPTPTMVTPMLQAPDLQAQQMQQLISAVSALTTKQNVKAPKGQRKQKQQKPKEKKEKQKKKPTXKKKQQQKPKPQAKKKKPGRRERMCMKIENDCIFEVKLDGKVTGYACLVGDKVMKPAHVKGTIDNPDLAKLTYKKSSKYDLECAQIPVHMKSDASKYTHEKPEGHYNWHHGAVQYSXGRFTIPTGAGKPGDSGRPIFDNKGRVVAIVLGGANEGARTALSVVTWTKDMVTRVTPEGTEEWSAALMMCILANTSFPCSSPPCYPCCYEKQPEQTLRMLEDNVNRPGYYELLEASMTCRNRSRHRRSVIEHFNVYKATRPYLAXCADCGDGYFCYSPVAIEKIRDEASDGMLKIQVSAQIGLDKAGTHAHTKMRYMAGHDVQESKRDSLRVYTSAACSIHGTMGHFIVAHCPPGDYLKXSFEDANSHVKACKVQYKHDPLPVGREKFVVRPHFGVELPCTSYQLTTAPTDEEIDMHTPPDIPDRTLLSQTAGNVKITAGGRTIRYNCTCGRDNVGTTSTDKTINTCKIDQCHAAVTSHDKWXFTSPFVPRADQTARKGKVHVPFPLTNVTCRVPLARAPDVTYGKKEVTLRLHPDHPTXFSYRSLGAVPHPYEEWVDKFSERIIPVTEEGIEYQWGNNPPVRLWAQLTTEGKPHGWPHEIIQYYYGLYPAATIAAVSGASLMALLTLAATCCMLATARRKCLTPYALTPGAVVPLTLGLLXCAPRANAASFAETMAYLWDENKTLFWMEXXXXXXALALLACCIKSLICCCKPFSFLVLLSLGASAKAYEHTATIPNVVGFPYKAHIERNXFSPMTLQLEVVXXSLEPTLNLEYITCEYKTVVPSPFIKCCGTSECSSKEQPDYQCKVYTGVYPFMWGGAYCFCDSENTQLSEAYVDRSDVCKHDHALAYKAHTASLKATIRISYGTINQTTEAFVNGEHAVNVGGSKFIFGPISTAWSPFDNKIVVYKDDVYNQDFPPYGSGQPGRFGDIQSRTVESKDLYANTALKLSRPSPGVVHVPYTQTPSGFKYWLKEKGSSLNTKAPFGCKIKTNPVRAMDCAVGSIPVSMDIPDSAFTRVVDAPAVTDLSCQVAVCTHSSDFGXVATLSYKTDKPGKCAVHSHSNVATLQEATVDVKEDGKVTVHFSXXSASPAFKVSVCDAKTTCTAACEPPKDHIVPYGASHNNQVFPDMSGTAMTWVQRMASGLGGLALIAVVVLVLVTCITMRR</sequence>
<protein>
    <recommendedName>
        <fullName>Structural polyprotein</fullName>
    </recommendedName>
    <alternativeName>
        <fullName>p130</fullName>
    </alternativeName>
    <component>
        <recommendedName>
            <fullName>Capsid protein</fullName>
            <ecNumber evidence="2">3.4.21.90</ecNumber>
        </recommendedName>
        <alternativeName>
            <fullName>Coat protein</fullName>
            <shortName>C</shortName>
        </alternativeName>
    </component>
    <component>
        <recommendedName>
            <fullName>Precursor of protein E3/E2</fullName>
        </recommendedName>
        <alternativeName>
            <fullName>p62</fullName>
        </alternativeName>
        <alternativeName>
            <fullName>pE2</fullName>
        </alternativeName>
    </component>
    <component>
        <recommendedName>
            <fullName>Assembly protein E3</fullName>
        </recommendedName>
    </component>
    <component>
        <recommendedName>
            <fullName>Spike glycoprotein E2</fullName>
        </recommendedName>
        <alternativeName>
            <fullName>E2 envelope glycoprotein</fullName>
        </alternativeName>
    </component>
    <component>
        <recommendedName>
            <fullName>6K protein</fullName>
        </recommendedName>
    </component>
    <component>
        <recommendedName>
            <fullName>Spike glycoprotein E1</fullName>
        </recommendedName>
        <alternativeName>
            <fullName>E1 envelope glycoprotein</fullName>
        </alternativeName>
    </component>
</protein>
<feature type="chain" id="PRO_0000041286" description="Capsid protein">
    <location>
        <begin position="1"/>
        <end position="270"/>
    </location>
</feature>
<feature type="chain" id="PRO_0000234324" description="Precursor of protein E3/E2">
    <location>
        <begin position="271"/>
        <end position="756"/>
    </location>
</feature>
<feature type="chain" id="PRO_0000041287" description="Assembly protein E3">
    <location>
        <begin position="271"/>
        <end position="334"/>
    </location>
</feature>
<feature type="chain" id="PRO_0000041288" description="Spike glycoprotein E2">
    <location>
        <begin position="335"/>
        <end position="756"/>
    </location>
</feature>
<feature type="chain" id="PRO_0000041289" description="6K protein">
    <location>
        <begin position="757"/>
        <end position="816"/>
    </location>
</feature>
<feature type="chain" id="PRO_0000041290" description="Spike glycoprotein E1">
    <location>
        <begin position="817"/>
        <end position="1254"/>
    </location>
</feature>
<feature type="topological domain" description="Extracellular" evidence="13">
    <location>
        <begin position="270"/>
        <end position="694"/>
    </location>
</feature>
<feature type="transmembrane region" description="Helical" evidence="13">
    <location>
        <begin position="695"/>
        <end position="715"/>
    </location>
</feature>
<feature type="topological domain" description="Cytoplasmic" evidence="13">
    <location>
        <begin position="716"/>
        <end position="756"/>
    </location>
</feature>
<feature type="topological domain" description="Extracellular" evidence="13">
    <location>
        <begin position="757"/>
        <end position="771"/>
    </location>
</feature>
<feature type="transmembrane region" description="Helical" evidence="13">
    <location>
        <begin position="772"/>
        <end position="792"/>
    </location>
</feature>
<feature type="topological domain" description="Cytoplasmic" evidence="13">
    <location>
        <position position="793"/>
    </location>
</feature>
<feature type="transmembrane region" description="Helical" evidence="13">
    <location>
        <begin position="794"/>
        <end position="814"/>
    </location>
</feature>
<feature type="topological domain" description="Extracellular" evidence="13">
    <location>
        <begin position="815"/>
        <end position="1231"/>
    </location>
</feature>
<feature type="transmembrane region" description="Helical" evidence="13">
    <location>
        <begin position="1232"/>
        <end position="1252"/>
    </location>
</feature>
<feature type="topological domain" description="Cytoplasmic" evidence="13">
    <location>
        <begin position="1253"/>
        <end position="1254"/>
    </location>
</feature>
<feature type="domain" description="Peptidase S3" evidence="14">
    <location>
        <begin position="122"/>
        <end position="270"/>
    </location>
</feature>
<feature type="region of interest" description="Host transcription inhibition" evidence="5">
    <location>
        <begin position="43"/>
        <end position="77"/>
    </location>
</feature>
<feature type="region of interest" description="Disordered" evidence="15">
    <location>
        <begin position="60"/>
        <end position="112"/>
    </location>
</feature>
<feature type="region of interest" description="Binding to the viral RNA" evidence="7">
    <location>
        <begin position="95"/>
        <end position="123"/>
    </location>
</feature>
<feature type="region of interest" description="Ribosome-binding" evidence="7">
    <location>
        <begin position="108"/>
        <end position="122"/>
    </location>
</feature>
<feature type="region of interest" description="Interaction with spike glycoprotein E2" evidence="3">
    <location>
        <begin position="164"/>
        <end position="169"/>
    </location>
</feature>
<feature type="region of interest" description="Dimerization of the capsid protein" evidence="6">
    <location>
        <begin position="192"/>
        <end position="202"/>
    </location>
</feature>
<feature type="region of interest" description="Dimerization of the capsid protein" evidence="6">
    <location>
        <begin position="228"/>
        <end position="232"/>
    </location>
</feature>
<feature type="region of interest" description="Functions as an uncleaved signal peptide for the precursor of protein E3/E2" evidence="2">
    <location>
        <begin position="271"/>
        <end position="282"/>
    </location>
</feature>
<feature type="region of interest" description="Interaction with host Mxra8 receptor" evidence="4">
    <location>
        <begin position="360"/>
        <end position="363"/>
    </location>
</feature>
<feature type="region of interest" description="Interaction with host Mxra8 receptor" evidence="4">
    <location>
        <begin position="396"/>
        <end position="398"/>
    </location>
</feature>
<feature type="region of interest" description="Interaction with host Mxra8 receptor" evidence="4">
    <location>
        <begin position="518"/>
        <end position="521"/>
    </location>
</feature>
<feature type="region of interest" description="Interaction with host Mxra8 receptor" evidence="4">
    <location>
        <begin position="550"/>
        <end position="556"/>
    </location>
</feature>
<feature type="region of interest" description="Interaction with the capsid protein" evidence="3">
    <location>
        <begin position="724"/>
        <end position="728"/>
    </location>
</feature>
<feature type="region of interest" description="Transient transmembrane before p62-6K protein processing" evidence="13">
    <location>
        <begin position="729"/>
        <end position="749"/>
    </location>
</feature>
<feature type="region of interest" description="E1 fusion peptide loop" evidence="12">
    <location>
        <begin position="900"/>
        <end position="917"/>
    </location>
</feature>
<feature type="short sequence motif" description="Nuclear localization signal" evidence="5">
    <location>
        <begin position="70"/>
        <end position="108"/>
    </location>
</feature>
<feature type="short sequence motif" description="Nuclear export signal" evidence="5">
    <location>
        <begin position="153"/>
        <end position="163"/>
    </location>
</feature>
<feature type="compositionally biased region" description="Basic residues" evidence="15">
    <location>
        <begin position="84"/>
        <end position="110"/>
    </location>
</feature>
<feature type="active site" description="Charge relay system" evidence="14">
    <location>
        <position position="148"/>
    </location>
</feature>
<feature type="active site" description="Charge relay system" evidence="14">
    <location>
        <position position="170"/>
    </location>
</feature>
<feature type="active site" description="Charge relay system" evidence="14">
    <location>
        <position position="222"/>
    </location>
</feature>
<feature type="site" description="Involved in dimerization of the capsid protein" evidence="11">
    <location>
        <position position="196"/>
    </location>
</feature>
<feature type="site" description="Involved in dimerization of the capsid protein" evidence="11">
    <location>
        <position position="229"/>
    </location>
</feature>
<feature type="site" description="Cleavage; by autolysis" evidence="2">
    <location>
        <begin position="270"/>
        <end position="271"/>
    </location>
</feature>
<feature type="site" description="Cleavage; by host furin" evidence="2">
    <location>
        <begin position="334"/>
        <end position="335"/>
    </location>
</feature>
<feature type="site" description="Cleavage; by host signal peptidase" evidence="2">
    <location>
        <begin position="756"/>
        <end position="757"/>
    </location>
</feature>
<feature type="site" description="Cleavage; by host signal peptidase" evidence="2">
    <location>
        <begin position="816"/>
        <end position="817"/>
    </location>
</feature>
<feature type="lipid moiety-binding region" description="S-palmitoyl cysteine; by host" evidence="13">
    <location>
        <position position="719"/>
    </location>
</feature>
<feature type="lipid moiety-binding region" description="S-palmitoyl cysteine; by host" evidence="3">
    <location>
        <position position="729"/>
    </location>
</feature>
<feature type="lipid moiety-binding region" description="S-palmitoyl cysteine; by host" evidence="10">
    <location>
        <position position="750"/>
    </location>
</feature>
<feature type="lipid moiety-binding region" description="S-palmitoyl cysteine; by host" evidence="10">
    <location>
        <position position="1249"/>
    </location>
</feature>
<feature type="lipid moiety-binding region" description="S-stearoyl cysteine; by host" evidence="1">
    <location>
        <position position="1249"/>
    </location>
</feature>
<feature type="glycosylation site" description="N-linked (GlcNAc...) asparagine; by host" evidence="13">
    <location>
        <position position="281"/>
    </location>
</feature>
<feature type="glycosylation site" description="N-linked (GlcNAc...) asparagine; by host" evidence="13">
    <location>
        <position position="328"/>
    </location>
</feature>
<feature type="glycosylation site" description="N-linked (GlcNAc...) asparagine; by host" evidence="10">
    <location>
        <position position="534"/>
    </location>
</feature>
<feature type="glycosylation site" description="N-linked (GlcNAc...) asparagine; by host" evidence="10">
    <location>
        <position position="596"/>
    </location>
</feature>
<feature type="glycosylation site" description="N-linked (GlcNAc...) asparagine; by host" evidence="10">
    <location>
        <position position="957"/>
    </location>
</feature>
<feature type="disulfide bond" evidence="1">
    <location>
        <begin position="122"/>
        <end position="137"/>
    </location>
</feature>
<feature type="disulfide bond" evidence="9">
    <location>
        <begin position="277"/>
        <end position="286"/>
    </location>
</feature>
<feature type="disulfide bond" evidence="9">
    <location>
        <begin position="291"/>
        <end position="295"/>
    </location>
</feature>
<feature type="disulfide bond" evidence="9">
    <location>
        <begin position="294"/>
        <end position="326"/>
    </location>
</feature>
<feature type="disulfide bond" evidence="8">
    <location>
        <begin position="353"/>
        <end position="459"/>
    </location>
</feature>
<feature type="disulfide bond" evidence="8">
    <location>
        <begin position="356"/>
        <end position="362"/>
    </location>
</feature>
<feature type="disulfide bond" evidence="8">
    <location>
        <begin position="425"/>
        <end position="439"/>
    </location>
</feature>
<feature type="disulfide bond" evidence="9">
    <location>
        <begin position="487"/>
        <end position="599"/>
    </location>
</feature>
<feature type="disulfide bond" evidence="9">
    <location>
        <begin position="535"/>
        <end position="559"/>
    </location>
</feature>
<feature type="disulfide bond" evidence="9">
    <location>
        <begin position="537"/>
        <end position="554"/>
    </location>
</feature>
<feature type="disulfide bond" evidence="9">
    <location>
        <begin position="729"/>
        <end position="750"/>
    </location>
</feature>
<feature type="disulfide bond" evidence="8">
    <location>
        <begin position="865"/>
        <end position="930"/>
    </location>
</feature>
<feature type="disulfide bond" evidence="8">
    <location>
        <begin position="878"/>
        <end position="910"/>
    </location>
</feature>
<feature type="disulfide bond" evidence="8">
    <location>
        <begin position="879"/>
        <end position="912"/>
    </location>
</feature>
<feature type="disulfide bond" evidence="8">
    <location>
        <begin position="884"/>
        <end position="894"/>
    </location>
</feature>
<feature type="disulfide bond" evidence="8">
    <location>
        <begin position="1075"/>
        <end position="1087"/>
    </location>
</feature>
<feature type="disulfide bond" evidence="8">
    <location>
        <begin position="1117"/>
        <end position="1192"/>
    </location>
</feature>
<feature type="disulfide bond" evidence="8">
    <location>
        <begin position="1122"/>
        <end position="1196"/>
    </location>
</feature>
<feature type="disulfide bond" evidence="8">
    <location>
        <begin position="1144"/>
        <end position="1186"/>
    </location>
</feature>
<name>POLS_RRVN</name>
<organismHost>
    <name type="scientific">Aedes</name>
    <dbReference type="NCBI Taxonomy" id="7158"/>
</organismHost>
<organismHost>
    <name type="scientific">Culex annulirostris</name>
    <name type="common">Common banded mosquito</name>
    <dbReference type="NCBI Taxonomy" id="162997"/>
</organismHost>
<organismHost>
    <name type="scientific">Homo sapiens</name>
    <name type="common">Human</name>
    <dbReference type="NCBI Taxonomy" id="9606"/>
</organismHost>
<organismHost>
    <name type="scientific">Macropus sp.</name>
    <name type="common">kangaroo</name>
    <dbReference type="NCBI Taxonomy" id="9322"/>
</organismHost>
<comment type="function">
    <molecule>Capsid protein</molecule>
    <text evidence="2 3 7">Forms an icosahedral capsid with a T=4 symmetry composed of 240 copies of the capsid protein surrounded by a lipid membrane through which penetrate 80 spikes composed of trimers of E1-E2 heterodimers (By similarity). The capsid protein binds to the viral RNA genome at a site adjacent to a ribosome binding site for viral genome translation following genome release (By similarity). Possesses a protease activity that results in its autocatalytic cleavage from the nascent structural protein (By similarity). Following its self-cleavage, the capsid protein transiently associates with ribosomes, and within several minutes the protein binds to viral RNA and rapidly assembles into icosahedric core particles (By similarity). The resulting nucleocapsid eventually associates with the cytoplasmic domain of the spike glycoprotein E2 at the cell membrane, leading to budding and formation of mature virions (By similarity). In case of infection, new virions attach to target cells and after clathrin-mediated endocytosis their membrane fuses with the host endosomal membrane (By similarity). This leads to the release of the nucleocapsid into the cytoplasm, followed by an uncoating event necessary for the genomic RNA to become accessible (By similarity). The uncoating might be triggered by the interaction of capsid proteins with ribosomes (By similarity). Binding of ribosomes would release the genomic RNA since the same region is genomic RNA-binding and ribosome-binding (By similarity). Specifically inhibits interleukin-1 receptor-associated kinase 1/IRAK1-dependent signaling during viral entry, representing a means by which the alphaviruses may evade innate immune detection and activation prior to viral gene expression (By similarity).</text>
</comment>
<comment type="function">
    <molecule>Assembly protein E3</molecule>
    <text evidence="2">Provides the signal sequence for the translocation of the precursor of protein E3/E2 to the host endoplasmic reticulum. Furin-cleaved E3 remains associated with spike glycoprotein E1 and mediates pH protection of the latter during the transport via the secretory pathway. After virion release from the host cell, the assembly protein E3 is gradually released in the extracellular space.</text>
</comment>
<comment type="function">
    <molecule>Spike glycoprotein E2</molecule>
    <text evidence="2 4">Plays a role in viral attachment to target host cell, by binding to the cell receptor MXRA8 (By similarity). The host LDLR may also act as a cell receptor for viral entry (By similarity). Synthesized as a p62 precursor which is processed by furin at the cell membrane just before virion budding, giving rise to E2-E1 heterodimer. The p62-E1 heterodimer is stable, whereas E2-E1 is unstable and dissociate at low pH. p62 is processed at the last step, presumably to avoid E1 fusion activation before its final export to cell surface. E2 C-terminus contains a transitory transmembrane that would be disrupted by palmitoylation, resulting in reorientation of the C-terminal tail from lumenal to cytoplasmic side. This step is critical since E2 C-terminus is involved in budding by interacting with capsid proteins. This release of E2 C-terminus in cytoplasm occurs lately in protein export, and precludes premature assembly of particles at the endoplasmic reticulum membrane (By similarity).</text>
</comment>
<comment type="function">
    <molecule>6K protein</molecule>
    <text evidence="2 3 4">Acts as a viroporin that participates in virus glycoprotein processing and transport to the plasma membrane, cell permeabilization and budding of viral particles (By similarity). The cation channel is permeable to Na(+)&gt;K(+)&gt;Ca(2+) in vitro (By similarity). Disrupts the calcium homeostasis of the cell, probably at the endoplasmic reticulum level (By similarity). This leads to cytoplasmic calcium elevation (By similarity). Because of its lipophilic properties, the 6K protein is postulated to influence the selection of lipids that interact with the transmembrane domains of the glycoproteins, which, in turn, affects the deformability of the bilayer required for the extreme curvature that occurs as budding proceeds. Present in low amount in virions, about 3% compared to viral glycoproteins (By similarity).</text>
</comment>
<comment type="function">
    <molecule>Spike glycoprotein E1</molecule>
    <text evidence="3">Class II viral fusion protein. Fusion activity is inactive as long as E1 is bound to E2 in mature virion. After virus attachment to target cell via host MXRA8 and endocytosis, acidification of the endosome induce dissociation of E1/E2 heterodimer and concomitant trimerization of the E1 subunits. This E1 trimer is fusion active, and promotes release of viral nucleocapsid in cytoplasm after endosome and viral membrane fusion. Efficient fusion requires the presence of cholesterol and sphingolipid in the target membrane.</text>
</comment>
<comment type="catalytic activity">
    <reaction evidence="2">
        <text>Autocatalytic release of the core protein from the N-terminus of the togavirus structural polyprotein by hydrolysis of a -Trp-|-Ser- bond.</text>
        <dbReference type="EC" id="3.4.21.90"/>
    </reaction>
</comment>
<comment type="subunit">
    <molecule>Capsid protein</molecule>
    <text evidence="3 11 12">Homodimer (By similarity). Homomultimer (By similarity). Interacts with host karyopherin KPNA4; this interaction allows the nuclear import of the viral capsid protein (By similarity). Interacts with spike glycoprotein E2 (By similarity). Interacts with host IRAK1; the interaction leads to inhibition of IRAK1-dependent signaling (By similarity).</text>
</comment>
<comment type="subunit">
    <molecule>Precursor of protein E3/E2</molecule>
    <text evidence="2 3 6 12">The precursor of protein E3/E2 and E1 form a heterodimer shortly after synthesis (By similarity).</text>
</comment>
<comment type="subunit">
    <molecule>Spike glycoprotein E1</molecule>
    <text evidence="2 3 12">The precursor of protein E3/E2 and E1 form a heterodimer shortly after synthesis (By similarity). Processing of the precursor of protein E3/E2 into E2 and E3 results in a heterodimer of the spike glycoproteins E2 and E1 (By similarity). Spike at virion surface are constituted of a trimer of E2-E1 heterodimers (By similarity). After target cell attachment and endocytosis, E1 change conformation to form homotrimers (By similarity). Interacts with 6K protein (By similarity).</text>
</comment>
<comment type="subunit">
    <molecule>Spike glycoprotein E2</molecule>
    <text evidence="3 4">Interacts with spike glycoprotein E1 (By similarity). Processing of the precursor of protein E3/E2 into E2 and E3 results in a heterodimer of the spike glycoproteins E2 and E1 (By similarity). Spike at virion surface are constituted of a trimer of E2-E1 heterodimers (By similarity). Interacts with 6K protein (By similarity). Interacts with host MXRA8; this interaction mediates virus entry (By similarity).</text>
</comment>
<comment type="subcellular location">
    <molecule>Capsid protein</molecule>
    <subcellularLocation>
        <location evidence="3">Virion</location>
    </subcellularLocation>
    <subcellularLocation>
        <location evidence="12">Host cytoplasm</location>
    </subcellularLocation>
    <subcellularLocation>
        <location evidence="3">Host cell membrane</location>
    </subcellularLocation>
    <subcellularLocation>
        <location evidence="12">Host nucleus</location>
    </subcellularLocation>
    <text evidence="12">Shuttles between the cytoplasm and the nucleus.</text>
</comment>
<comment type="subcellular location">
    <molecule>Spike glycoprotein E2</molecule>
    <subcellularLocation>
        <location evidence="12">Virion membrane</location>
        <topology evidence="13">Single-pass type I membrane protein</topology>
    </subcellularLocation>
    <subcellularLocation>
        <location evidence="3">Host cell membrane</location>
        <topology evidence="12">Single-pass type I membrane protein</topology>
    </subcellularLocation>
</comment>
<comment type="subcellular location">
    <molecule>6K protein</molecule>
    <subcellularLocation>
        <location evidence="3">Host cell membrane</location>
        <topology evidence="13">Multi-pass membrane protein</topology>
    </subcellularLocation>
    <subcellularLocation>
        <location evidence="3">Virion membrane</location>
        <topology evidence="13">Multi-pass membrane protein</topology>
    </subcellularLocation>
    <subcellularLocation>
        <location evidence="3">Host Golgi apparatus</location>
    </subcellularLocation>
    <subcellularLocation>
        <location>Host Golgi apparatus</location>
        <location>Host trans-Golgi network</location>
    </subcellularLocation>
    <subcellularLocation>
        <location evidence="3">Host endoplasmic reticulum</location>
    </subcellularLocation>
</comment>
<comment type="subcellular location">
    <molecule>Spike glycoprotein E1</molecule>
    <subcellularLocation>
        <location evidence="12">Virion membrane</location>
        <topology evidence="13">Single-pass type I membrane protein</topology>
    </subcellularLocation>
    <subcellularLocation>
        <location evidence="3 12">Host cell membrane</location>
        <topology evidence="13">Single-pass type I membrane protein</topology>
    </subcellularLocation>
</comment>
<comment type="domain">
    <molecule>Capsid protein</molecule>
    <text evidence="3 5">The very N-terminus also plays a role in the particle assembly process (By similarity). The N-terminus also contains a nuclear localization signal and a supra nuclear export signal (supraNES), which is an unusually strong NES that mediates host CRM1 binding in the absence of RanGTP and thus can bind CRM1, not only in the nucleus, but also in the cytoplasm (By similarity). The C-terminus functions as a protease during translation to cleave itself from the translating structural polyprotein (By similarity).</text>
</comment>
<comment type="domain">
    <text evidence="2">Structural polyprotein: As soon as the capsid protein has been autocleaved, an internal uncleaved signal peptide directs the remaining polyprotein to the endoplasmic reticulum.</text>
</comment>
<comment type="PTM">
    <text evidence="2">Structural polyprotein: Specific enzymatic cleavages in vivo yield mature proteins. Capsid protein is auto-cleaved during polyprotein translation, unmasking a signal peptide at the N-terminus of the precursor of E3/E2 (By similarity). The remaining polyprotein is then targeted to the host endoplasmic reticulum, where host signal peptidase cleaves it into pE2, 6K and E1 proteins. pE2 is further processed to mature E3 and E2 by host furin in trans-Golgi vesicle (By similarity).</text>
</comment>
<comment type="PTM">
    <molecule>Spike glycoprotein E2</molecule>
    <text evidence="2">Palmitoylated via thioester bonds. These palmitoylations may induce disruption of the C-terminus transmembrane. This would result in the reorientation of E2 C-terminus from lumenal to cytoplasmic side.</text>
</comment>
<comment type="PTM">
    <molecule>Spike glycoprotein E1</molecule>
    <text evidence="2">N-glycosylated.</text>
</comment>
<comment type="PTM">
    <molecule>Spike glycoprotein E2</molecule>
    <text evidence="2">N-glycosylated.</text>
</comment>
<comment type="PTM">
    <molecule>Assembly protein E3</molecule>
    <text evidence="2">N-glycosylated.</text>
</comment>
<comment type="PTM">
    <molecule>6K protein</molecule>
    <text evidence="2">Palmitoylated via thioester bonds.</text>
</comment>
<comment type="miscellaneous">
    <text evidence="16">Belongs to the Old World alphaviruses that usually cause fever, maculopapular rash, arthralgia and myalgia.</text>
</comment>
<comment type="miscellaneous">
    <text evidence="11">Structural polyprotein: Translated from a subgenomic RNA synthesized during togavirus replication.</text>
</comment>
<proteinExistence type="inferred from homology"/>
<reference key="1">
    <citation type="journal article" date="1988" name="Virology">
        <title>Genome sequences of a mouse-avirulent and a mouse-virulent strain of Ross River virus.</title>
        <authorList>
            <person name="Faragher S.G."/>
            <person name="Meek A.D.J."/>
            <person name="Rice C.M."/>
            <person name="Dalgarno L."/>
        </authorList>
    </citation>
    <scope>NUCLEOTIDE SEQUENCE [GENOMIC RNA]</scope>
</reference>